<organism>
    <name type="scientific">Clostridium kluyveri (strain ATCC 8527 / DSM 555 / NBRC 12016 / NCIMB 10680 / K1)</name>
    <dbReference type="NCBI Taxonomy" id="431943"/>
    <lineage>
        <taxon>Bacteria</taxon>
        <taxon>Bacillati</taxon>
        <taxon>Bacillota</taxon>
        <taxon>Clostridia</taxon>
        <taxon>Eubacteriales</taxon>
        <taxon>Clostridiaceae</taxon>
        <taxon>Clostridium</taxon>
    </lineage>
</organism>
<proteinExistence type="inferred from homology"/>
<protein>
    <recommendedName>
        <fullName evidence="1">Putative competence-damage inducible protein</fullName>
    </recommendedName>
</protein>
<gene>
    <name evidence="1" type="primary">cinA</name>
    <name type="ordered locus">CKL_3409</name>
</gene>
<name>CINA_CLOK5</name>
<reference key="1">
    <citation type="journal article" date="2008" name="Proc. Natl. Acad. Sci. U.S.A.">
        <title>The genome of Clostridium kluyveri, a strict anaerobe with unique metabolic features.</title>
        <authorList>
            <person name="Seedorf H."/>
            <person name="Fricke W.F."/>
            <person name="Veith B."/>
            <person name="Brueggemann H."/>
            <person name="Liesegang H."/>
            <person name="Strittmatter A."/>
            <person name="Miethke M."/>
            <person name="Buckel W."/>
            <person name="Hinderberger J."/>
            <person name="Li F."/>
            <person name="Hagemeier C."/>
            <person name="Thauer R.K."/>
            <person name="Gottschalk G."/>
        </authorList>
    </citation>
    <scope>NUCLEOTIDE SEQUENCE [LARGE SCALE GENOMIC DNA]</scope>
    <source>
        <strain>ATCC 8527 / DSM 555 / NBRC 12016 / NCIMB 10680 / K1</strain>
    </source>
</reference>
<sequence length="410" mass="45043">MKSEILCVGTEILLGDIVNTNSQFISKELANLGIEVYHQSVVGDNPQRLLDELKLGFERSDIIITTGGLGPTQDDLTKETGAKFFNRELVLDKKSLKELKEHFNRMGKSYSDGNNIKQAYFPKGSTIFPNPYGTAPGCAIEDKGKILIVLPGPPRETKPMFKNYVIPLLKKYSNGIIKSKTLRIYGLGESAMAERVSPFIENSTNPTVAPYAKEEDIILRITARAAEEKEALSLIEPVEIELRKILGVNVYGEDDVKMEEVLGRLLIDKGYTLSCAESCTGGLIASKLINYPGISKAFKEGVVAYSNEAKIKRLGVKKDTLDKYGAVSPEVAKEMAIGIAETSNTDIGISTTGIAGPDGGTPEKPIGLVYLGLYNRGEIKVKELRHAGTRDMIRKRATMNALDWIRRQIL</sequence>
<evidence type="ECO:0000255" key="1">
    <source>
        <dbReference type="HAMAP-Rule" id="MF_00226"/>
    </source>
</evidence>
<comment type="similarity">
    <text evidence="1">Belongs to the CinA family.</text>
</comment>
<accession>A5N2R5</accession>
<feature type="chain" id="PRO_1000078174" description="Putative competence-damage inducible protein">
    <location>
        <begin position="1"/>
        <end position="410"/>
    </location>
</feature>
<dbReference type="EMBL" id="CP000673">
    <property type="protein sequence ID" value="EDK35411.1"/>
    <property type="molecule type" value="Genomic_DNA"/>
</dbReference>
<dbReference type="RefSeq" id="WP_012103740.1">
    <property type="nucleotide sequence ID" value="NC_009706.1"/>
</dbReference>
<dbReference type="SMR" id="A5N2R5"/>
<dbReference type="STRING" id="431943.CKL_3409"/>
<dbReference type="KEGG" id="ckl:CKL_3409"/>
<dbReference type="eggNOG" id="COG1058">
    <property type="taxonomic scope" value="Bacteria"/>
</dbReference>
<dbReference type="eggNOG" id="COG1546">
    <property type="taxonomic scope" value="Bacteria"/>
</dbReference>
<dbReference type="HOGENOM" id="CLU_030805_9_3_9"/>
<dbReference type="Proteomes" id="UP000002411">
    <property type="component" value="Chromosome"/>
</dbReference>
<dbReference type="CDD" id="cd00885">
    <property type="entry name" value="cinA"/>
    <property type="match status" value="1"/>
</dbReference>
<dbReference type="Gene3D" id="3.30.70.2860">
    <property type="match status" value="1"/>
</dbReference>
<dbReference type="Gene3D" id="3.90.950.20">
    <property type="entry name" value="CinA-like"/>
    <property type="match status" value="1"/>
</dbReference>
<dbReference type="Gene3D" id="3.40.980.10">
    <property type="entry name" value="MoaB/Mog-like domain"/>
    <property type="match status" value="1"/>
</dbReference>
<dbReference type="HAMAP" id="MF_00226_B">
    <property type="entry name" value="CinA_B"/>
    <property type="match status" value="1"/>
</dbReference>
<dbReference type="InterPro" id="IPR050101">
    <property type="entry name" value="CinA"/>
</dbReference>
<dbReference type="InterPro" id="IPR036653">
    <property type="entry name" value="CinA-like_C"/>
</dbReference>
<dbReference type="InterPro" id="IPR008136">
    <property type="entry name" value="CinA_C"/>
</dbReference>
<dbReference type="InterPro" id="IPR041424">
    <property type="entry name" value="CinA_KH"/>
</dbReference>
<dbReference type="InterPro" id="IPR008135">
    <property type="entry name" value="Competence-induced_CinA"/>
</dbReference>
<dbReference type="InterPro" id="IPR036425">
    <property type="entry name" value="MoaB/Mog-like_dom_sf"/>
</dbReference>
<dbReference type="InterPro" id="IPR001453">
    <property type="entry name" value="MoaB/Mog_dom"/>
</dbReference>
<dbReference type="NCBIfam" id="TIGR00200">
    <property type="entry name" value="cinA_nterm"/>
    <property type="match status" value="1"/>
</dbReference>
<dbReference type="NCBIfam" id="TIGR00177">
    <property type="entry name" value="molyb_syn"/>
    <property type="match status" value="1"/>
</dbReference>
<dbReference type="NCBIfam" id="TIGR00199">
    <property type="entry name" value="PncC_domain"/>
    <property type="match status" value="1"/>
</dbReference>
<dbReference type="NCBIfam" id="NF001813">
    <property type="entry name" value="PRK00549.1"/>
    <property type="match status" value="1"/>
</dbReference>
<dbReference type="PANTHER" id="PTHR13939">
    <property type="entry name" value="NICOTINAMIDE-NUCLEOTIDE AMIDOHYDROLASE PNCC"/>
    <property type="match status" value="1"/>
</dbReference>
<dbReference type="PANTHER" id="PTHR13939:SF0">
    <property type="entry name" value="NMN AMIDOHYDROLASE-LIKE PROTEIN YFAY"/>
    <property type="match status" value="1"/>
</dbReference>
<dbReference type="Pfam" id="PF02464">
    <property type="entry name" value="CinA"/>
    <property type="match status" value="1"/>
</dbReference>
<dbReference type="Pfam" id="PF18146">
    <property type="entry name" value="CinA_KH"/>
    <property type="match status" value="1"/>
</dbReference>
<dbReference type="Pfam" id="PF00994">
    <property type="entry name" value="MoCF_biosynth"/>
    <property type="match status" value="1"/>
</dbReference>
<dbReference type="PIRSF" id="PIRSF006728">
    <property type="entry name" value="CinA"/>
    <property type="match status" value="1"/>
</dbReference>
<dbReference type="SMART" id="SM00852">
    <property type="entry name" value="MoCF_biosynth"/>
    <property type="match status" value="1"/>
</dbReference>
<dbReference type="SUPFAM" id="SSF142433">
    <property type="entry name" value="CinA-like"/>
    <property type="match status" value="1"/>
</dbReference>
<dbReference type="SUPFAM" id="SSF53218">
    <property type="entry name" value="Molybdenum cofactor biosynthesis proteins"/>
    <property type="match status" value="1"/>
</dbReference>
<keyword id="KW-1185">Reference proteome</keyword>